<sequence length="161" mass="17346">MSIVTKSIVNADAEARYLSPGELDRIKSFVAGGQQRLRIAQALTDNRERLVKQAGDQLFQKRPDVVSPGGNAYGQEMTATCLRDLDYYLRLVTYGIVAGDVTPIEEIGVIGVREMYKSLGTPIEAVGEGVRALKNAASTLLSAEDAAEAGSYFDYVVGALQ</sequence>
<comment type="function">
    <text>Light-harvesting photosynthetic bile pigment-protein from the phycobiliprotein complex. Allophycocyanin has a maximum absorption at approximately 650 to 653 nanometers.</text>
</comment>
<comment type="subunit">
    <text>Heterohexamer of two alpha chains, one alpha-B chain and three beta chains.</text>
</comment>
<comment type="subcellular location">
    <subcellularLocation>
        <location>Cellular thylakoid membrane</location>
        <topology>Peripheral membrane protein</topology>
        <orientation>Cytoplasmic side</orientation>
    </subcellularLocation>
    <text>Forms the core of the phycobilisome.</text>
</comment>
<comment type="PTM">
    <text evidence="3">Contains one covalently linked phycocyanobilin chromophore (Probable). The chromophore is added by phycocyanobilin lyase CpcS 1.</text>
</comment>
<comment type="similarity">
    <text evidence="3">Belongs to the phycobiliprotein family.</text>
</comment>
<reference key="1">
    <citation type="journal article" date="1997" name="Photosyn. Res.">
        <title>Transposon insertion in genes coding for the biosynthesis of structural components of the Anabaena sp. phycobilisome.</title>
        <authorList>
            <person name="Cai Y.A."/>
            <person name="Schwarts S.H."/>
            <person name="Glazer A.N."/>
        </authorList>
    </citation>
    <scope>NUCLEOTIDE SEQUENCE [GENOMIC DNA]</scope>
</reference>
<reference key="2">
    <citation type="journal article" date="2001" name="DNA Res.">
        <title>Complete genomic sequence of the filamentous nitrogen-fixing cyanobacterium Anabaena sp. strain PCC 7120.</title>
        <authorList>
            <person name="Kaneko T."/>
            <person name="Nakamura Y."/>
            <person name="Wolk C.P."/>
            <person name="Kuritz T."/>
            <person name="Sasamoto S."/>
            <person name="Watanabe A."/>
            <person name="Iriguchi M."/>
            <person name="Ishikawa A."/>
            <person name="Kawashima K."/>
            <person name="Kimura T."/>
            <person name="Kishida Y."/>
            <person name="Kohara M."/>
            <person name="Matsumoto M."/>
            <person name="Matsuno A."/>
            <person name="Muraki A."/>
            <person name="Nakazaki N."/>
            <person name="Shimpo S."/>
            <person name="Sugimoto M."/>
            <person name="Takazawa M."/>
            <person name="Yamada M."/>
            <person name="Yasuda M."/>
            <person name="Tabata S."/>
        </authorList>
    </citation>
    <scope>NUCLEOTIDE SEQUENCE [LARGE SCALE GENOMIC DNA]</scope>
    <source>
        <strain>PCC 7120 / SAG 25.82 / UTEX 2576</strain>
    </source>
</reference>
<reference key="3">
    <citation type="journal article" date="1996" name="Eur. J. Biochem.">
        <title>Isolation, characterization and electron microscopy analysis of a hemidiscoidal phycobilisome type from the cyanobacterium Anabaena sp. PCC 7120.</title>
        <authorList>
            <person name="Ducret A."/>
            <person name="Sidler W."/>
            <person name="Wehrli E."/>
            <person name="Frank G."/>
            <person name="Zuber H."/>
        </authorList>
    </citation>
    <scope>PROTEIN SEQUENCE OF 2-60</scope>
</reference>
<reference key="4">
    <citation type="journal article" date="2007" name="Proc. Natl. Acad. Sci. U.S.A.">
        <title>Phycobilin:cystein-84 biliprotein lyase, a near-universal lyase for cysteine-84-binding sites in cyanobacterial phycobiliproteins.</title>
        <authorList>
            <person name="Zhao K.H."/>
            <person name="Su P."/>
            <person name="Tu J.M."/>
            <person name="Wang X."/>
            <person name="Liu H."/>
            <person name="Ploscher M."/>
            <person name="Eichacker L."/>
            <person name="Yang B."/>
            <person name="Zhou M."/>
            <person name="Scheer H."/>
        </authorList>
    </citation>
    <scope>CHROMOPHORE ATTACHMENT AT CYS-81</scope>
    <source>
        <strain>PCC 7120 / SAG 25.82 / UTEX 2576</strain>
    </source>
</reference>
<proteinExistence type="evidence at protein level"/>
<feature type="initiator methionine" description="Removed" evidence="2">
    <location>
        <position position="1"/>
    </location>
</feature>
<feature type="chain" id="PRO_0000199070" description="Allophycocyanin subunit alpha 1">
    <location>
        <begin position="2"/>
        <end position="161"/>
    </location>
</feature>
<feature type="binding site" description="covalent" evidence="3">
    <location>
        <position position="81"/>
    </location>
    <ligand>
        <name>(2R,3E)-phycocyanobilin</name>
        <dbReference type="ChEBI" id="CHEBI:85275"/>
    </ligand>
</feature>
<feature type="modified residue" description="N4-methylasparagine" evidence="1">
    <location>
        <position position="71"/>
    </location>
</feature>
<organism>
    <name type="scientific">Nostoc sp. (strain PCC 7120 / SAG 25.82 / UTEX 2576)</name>
    <dbReference type="NCBI Taxonomy" id="103690"/>
    <lineage>
        <taxon>Bacteria</taxon>
        <taxon>Bacillati</taxon>
        <taxon>Cyanobacteriota</taxon>
        <taxon>Cyanophyceae</taxon>
        <taxon>Nostocales</taxon>
        <taxon>Nostocaceae</taxon>
        <taxon>Nostoc</taxon>
    </lineage>
</organism>
<gene>
    <name type="primary">apcA1</name>
    <name type="ordered locus">alr0021</name>
</gene>
<keyword id="KW-0002">3D-structure</keyword>
<keyword id="KW-0042">Antenna complex</keyword>
<keyword id="KW-0089">Bile pigment</keyword>
<keyword id="KW-0157">Chromophore</keyword>
<keyword id="KW-0903">Direct protein sequencing</keyword>
<keyword id="KW-0249">Electron transport</keyword>
<keyword id="KW-0472">Membrane</keyword>
<keyword id="KW-0488">Methylation</keyword>
<keyword id="KW-0602">Photosynthesis</keyword>
<keyword id="KW-0605">Phycobilisome</keyword>
<keyword id="KW-1185">Reference proteome</keyword>
<keyword id="KW-0793">Thylakoid</keyword>
<keyword id="KW-0813">Transport</keyword>
<dbReference type="EMBL" id="U96137">
    <property type="protein sequence ID" value="AAC97590.1"/>
    <property type="molecule type" value="Genomic_DNA"/>
</dbReference>
<dbReference type="EMBL" id="BA000019">
    <property type="protein sequence ID" value="BAB77545.1"/>
    <property type="molecule type" value="Genomic_DNA"/>
</dbReference>
<dbReference type="PIR" id="AE1809">
    <property type="entry name" value="AE1809"/>
</dbReference>
<dbReference type="PDB" id="7EYD">
    <property type="method" value="EM"/>
    <property type="resolution" value="3.90 A"/>
    <property type="chains" value="A8/A9/C8/C9/E8/E9/G9/H8/I9/J8/K9/L8/N9/O8/P9/Q8/R9/S8/T9/V8/X8/X9/Z8/Z9/b9/c8/d9/e8/f9/g8=1-161"/>
</dbReference>
<dbReference type="PDBsum" id="7EYD"/>
<dbReference type="EMDB" id="EMD-31381"/>
<dbReference type="SMR" id="P80555"/>
<dbReference type="STRING" id="103690.gene:10492025"/>
<dbReference type="KEGG" id="ana:alr0021"/>
<dbReference type="eggNOG" id="ENOG502Z7RG">
    <property type="taxonomic scope" value="Bacteria"/>
</dbReference>
<dbReference type="OrthoDB" id="512145at2"/>
<dbReference type="Proteomes" id="UP000002483">
    <property type="component" value="Chromosome"/>
</dbReference>
<dbReference type="GO" id="GO:0030089">
    <property type="term" value="C:phycobilisome"/>
    <property type="evidence" value="ECO:0007669"/>
    <property type="project" value="UniProtKB-KW"/>
</dbReference>
<dbReference type="GO" id="GO:0031676">
    <property type="term" value="C:plasma membrane-derived thylakoid membrane"/>
    <property type="evidence" value="ECO:0007669"/>
    <property type="project" value="UniProtKB-SubCell"/>
</dbReference>
<dbReference type="GO" id="GO:0015979">
    <property type="term" value="P:photosynthesis"/>
    <property type="evidence" value="ECO:0007669"/>
    <property type="project" value="UniProtKB-KW"/>
</dbReference>
<dbReference type="CDD" id="cd12125">
    <property type="entry name" value="APC_alpha"/>
    <property type="match status" value="1"/>
</dbReference>
<dbReference type="Gene3D" id="1.10.490.20">
    <property type="entry name" value="Phycocyanins"/>
    <property type="match status" value="1"/>
</dbReference>
<dbReference type="InterPro" id="IPR009050">
    <property type="entry name" value="Globin-like_sf"/>
</dbReference>
<dbReference type="InterPro" id="IPR012128">
    <property type="entry name" value="Phycobilisome_asu/bsu"/>
</dbReference>
<dbReference type="InterPro" id="IPR038719">
    <property type="entry name" value="Phycobilisome_asu/bsu_sf"/>
</dbReference>
<dbReference type="PANTHER" id="PTHR34011:SF2">
    <property type="entry name" value="ALLOPHYCOCYANIN ALPHA CHAIN"/>
    <property type="match status" value="1"/>
</dbReference>
<dbReference type="PANTHER" id="PTHR34011">
    <property type="entry name" value="PHYCOBILISOME 32.1 KDA LINKER POLYPEPTIDE, PHYCOCYANIN-ASSOCIATED, ROD 2-RELATED"/>
    <property type="match status" value="1"/>
</dbReference>
<dbReference type="Pfam" id="PF00502">
    <property type="entry name" value="Phycobilisome"/>
    <property type="match status" value="1"/>
</dbReference>
<dbReference type="PIRSF" id="PIRSF000081">
    <property type="entry name" value="Phycocyanin"/>
    <property type="match status" value="1"/>
</dbReference>
<dbReference type="SUPFAM" id="SSF46458">
    <property type="entry name" value="Globin-like"/>
    <property type="match status" value="1"/>
</dbReference>
<name>PHAA1_NOSS1</name>
<evidence type="ECO:0000250" key="1"/>
<evidence type="ECO:0000269" key="2">
    <source>
    </source>
</evidence>
<evidence type="ECO:0000305" key="3"/>
<accession>P80555</accession>
<protein>
    <recommendedName>
        <fullName>Allophycocyanin subunit alpha 1</fullName>
    </recommendedName>
</protein>